<name>FDHE_ECO8A</name>
<sequence>MSIRIIPQDELGSSEKRTADMIPPLLFPRLKNLYNRRAERLRELAENNPLGDYLRFAALIAHAQEVVLYDHPLEMDLTARIKEASAQGKPPLDIHVLPRDKHWQKLLMALIAELKPEMSGPALAVIENLEKASTQELEDMASALFASDFSSVSSDKAPFIWAALSLYWAQMANLIPGKARAEYGEQRQYCPVCGSMPVSSMVQIGTTQGLRYLHCNLCETEWHVVRVKCSNCEQSGKLHYWSLDDEQAAIKAESCDDCGTYLKILYQEKEPKVEAVADDLASLVLDARMEQEGYARSSINPFLFPGEGE</sequence>
<gene>
    <name evidence="1" type="primary">fdhE</name>
    <name type="ordered locus">ECIAI1_4095</name>
</gene>
<protein>
    <recommendedName>
        <fullName evidence="1">Protein FdhE</fullName>
    </recommendedName>
</protein>
<dbReference type="EMBL" id="CU928160">
    <property type="protein sequence ID" value="CAR00866.1"/>
    <property type="molecule type" value="Genomic_DNA"/>
</dbReference>
<dbReference type="RefSeq" id="WP_000027708.1">
    <property type="nucleotide sequence ID" value="NC_011741.1"/>
</dbReference>
<dbReference type="SMR" id="B7M693"/>
<dbReference type="GeneID" id="93778047"/>
<dbReference type="KEGG" id="ecr:ECIAI1_4095"/>
<dbReference type="HOGENOM" id="CLU_055275_0_0_6"/>
<dbReference type="GO" id="GO:0005829">
    <property type="term" value="C:cytosol"/>
    <property type="evidence" value="ECO:0007669"/>
    <property type="project" value="TreeGrafter"/>
</dbReference>
<dbReference type="GO" id="GO:0008199">
    <property type="term" value="F:ferric iron binding"/>
    <property type="evidence" value="ECO:0007669"/>
    <property type="project" value="TreeGrafter"/>
</dbReference>
<dbReference type="GO" id="GO:0051604">
    <property type="term" value="P:protein maturation"/>
    <property type="evidence" value="ECO:0007669"/>
    <property type="project" value="TreeGrafter"/>
</dbReference>
<dbReference type="CDD" id="cd16341">
    <property type="entry name" value="FdhE"/>
    <property type="match status" value="1"/>
</dbReference>
<dbReference type="FunFam" id="3.90.1670.10:FF:000001">
    <property type="entry name" value="Protein FdhE"/>
    <property type="match status" value="1"/>
</dbReference>
<dbReference type="Gene3D" id="3.90.1670.10">
    <property type="entry name" value="FdhE-like domain"/>
    <property type="match status" value="1"/>
</dbReference>
<dbReference type="HAMAP" id="MF_00611">
    <property type="entry name" value="FdeH"/>
    <property type="match status" value="1"/>
</dbReference>
<dbReference type="InterPro" id="IPR024064">
    <property type="entry name" value="FdhE-like_sf"/>
</dbReference>
<dbReference type="InterPro" id="IPR056796">
    <property type="entry name" value="FdhE_C"/>
</dbReference>
<dbReference type="InterPro" id="IPR056797">
    <property type="entry name" value="FdhE_central"/>
</dbReference>
<dbReference type="InterPro" id="IPR056774">
    <property type="entry name" value="FdhE_N"/>
</dbReference>
<dbReference type="InterPro" id="IPR006452">
    <property type="entry name" value="Formate_DH_accessory"/>
</dbReference>
<dbReference type="NCBIfam" id="TIGR01562">
    <property type="entry name" value="FdhE"/>
    <property type="match status" value="1"/>
</dbReference>
<dbReference type="NCBIfam" id="NF002925">
    <property type="entry name" value="PRK03564.1"/>
    <property type="match status" value="1"/>
</dbReference>
<dbReference type="PANTHER" id="PTHR37689">
    <property type="entry name" value="PROTEIN FDHE"/>
    <property type="match status" value="1"/>
</dbReference>
<dbReference type="PANTHER" id="PTHR37689:SF1">
    <property type="entry name" value="PROTEIN FDHE"/>
    <property type="match status" value="1"/>
</dbReference>
<dbReference type="Pfam" id="PF24860">
    <property type="entry name" value="FdhE_C"/>
    <property type="match status" value="1"/>
</dbReference>
<dbReference type="Pfam" id="PF24859">
    <property type="entry name" value="FdhE_central"/>
    <property type="match status" value="1"/>
</dbReference>
<dbReference type="Pfam" id="PF04216">
    <property type="entry name" value="FdhE_N"/>
    <property type="match status" value="1"/>
</dbReference>
<dbReference type="PIRSF" id="PIRSF018296">
    <property type="entry name" value="Format_dh_formtn"/>
    <property type="match status" value="1"/>
</dbReference>
<dbReference type="SUPFAM" id="SSF144020">
    <property type="entry name" value="FdhE-like"/>
    <property type="match status" value="1"/>
</dbReference>
<proteinExistence type="inferred from homology"/>
<comment type="function">
    <text evidence="1">Necessary for formate dehydrogenase activity.</text>
</comment>
<comment type="subcellular location">
    <subcellularLocation>
        <location evidence="1">Cytoplasm</location>
    </subcellularLocation>
</comment>
<comment type="similarity">
    <text evidence="1">Belongs to the FdhE family.</text>
</comment>
<reference key="1">
    <citation type="journal article" date="2009" name="PLoS Genet.">
        <title>Organised genome dynamics in the Escherichia coli species results in highly diverse adaptive paths.</title>
        <authorList>
            <person name="Touchon M."/>
            <person name="Hoede C."/>
            <person name="Tenaillon O."/>
            <person name="Barbe V."/>
            <person name="Baeriswyl S."/>
            <person name="Bidet P."/>
            <person name="Bingen E."/>
            <person name="Bonacorsi S."/>
            <person name="Bouchier C."/>
            <person name="Bouvet O."/>
            <person name="Calteau A."/>
            <person name="Chiapello H."/>
            <person name="Clermont O."/>
            <person name="Cruveiller S."/>
            <person name="Danchin A."/>
            <person name="Diard M."/>
            <person name="Dossat C."/>
            <person name="Karoui M.E."/>
            <person name="Frapy E."/>
            <person name="Garry L."/>
            <person name="Ghigo J.M."/>
            <person name="Gilles A.M."/>
            <person name="Johnson J."/>
            <person name="Le Bouguenec C."/>
            <person name="Lescat M."/>
            <person name="Mangenot S."/>
            <person name="Martinez-Jehanne V."/>
            <person name="Matic I."/>
            <person name="Nassif X."/>
            <person name="Oztas S."/>
            <person name="Petit M.A."/>
            <person name="Pichon C."/>
            <person name="Rouy Z."/>
            <person name="Ruf C.S."/>
            <person name="Schneider D."/>
            <person name="Tourret J."/>
            <person name="Vacherie B."/>
            <person name="Vallenet D."/>
            <person name="Medigue C."/>
            <person name="Rocha E.P.C."/>
            <person name="Denamur E."/>
        </authorList>
    </citation>
    <scope>NUCLEOTIDE SEQUENCE [LARGE SCALE GENOMIC DNA]</scope>
    <source>
        <strain>IAI1</strain>
    </source>
</reference>
<evidence type="ECO:0000255" key="1">
    <source>
        <dbReference type="HAMAP-Rule" id="MF_00611"/>
    </source>
</evidence>
<feature type="chain" id="PRO_1000130356" description="Protein FdhE">
    <location>
        <begin position="1"/>
        <end position="309"/>
    </location>
</feature>
<accession>B7M693</accession>
<organism>
    <name type="scientific">Escherichia coli O8 (strain IAI1)</name>
    <dbReference type="NCBI Taxonomy" id="585034"/>
    <lineage>
        <taxon>Bacteria</taxon>
        <taxon>Pseudomonadati</taxon>
        <taxon>Pseudomonadota</taxon>
        <taxon>Gammaproteobacteria</taxon>
        <taxon>Enterobacterales</taxon>
        <taxon>Enterobacteriaceae</taxon>
        <taxon>Escherichia</taxon>
    </lineage>
</organism>
<keyword id="KW-0963">Cytoplasm</keyword>